<keyword id="KW-0068">Autocatalytic cleavage</keyword>
<keyword id="KW-0227">DNA damage</keyword>
<keyword id="KW-0234">DNA repair</keyword>
<keyword id="KW-0235">DNA replication</keyword>
<keyword id="KW-0238">DNA-binding</keyword>
<keyword id="KW-0378">Hydrolase</keyword>
<keyword id="KW-0678">Repressor</keyword>
<keyword id="KW-0742">SOS response</keyword>
<keyword id="KW-0804">Transcription</keyword>
<keyword id="KW-0805">Transcription regulation</keyword>
<sequence length="206" mass="22635">MRPLTPRQAEILELIKRNIADTGMPPTRAEIATRLGFKSANAAEEHLKALAKKGCIEIMPGTSRGIRLTAEVEEVTETGLPLIGQVAAGEPILAQEHVEQYYQVDPSMFHPAADFLLRVKGDSMKNIGILEGDLLAVHKVQQARNGQVVVARVDDDVTVKRFEKKGNVVYLHAENEDYSPIKVDLGYQSLTIEGLAVGVIRNGDWL</sequence>
<reference key="1">
    <citation type="submission" date="2007-11" db="EMBL/GenBank/DDBJ databases">
        <title>Complete sequence of chromosome of Shewanella baltica OS195.</title>
        <authorList>
            <consortium name="US DOE Joint Genome Institute"/>
            <person name="Copeland A."/>
            <person name="Lucas S."/>
            <person name="Lapidus A."/>
            <person name="Barry K."/>
            <person name="Glavina del Rio T."/>
            <person name="Dalin E."/>
            <person name="Tice H."/>
            <person name="Pitluck S."/>
            <person name="Chain P."/>
            <person name="Malfatti S."/>
            <person name="Shin M."/>
            <person name="Vergez L."/>
            <person name="Schmutz J."/>
            <person name="Larimer F."/>
            <person name="Land M."/>
            <person name="Hauser L."/>
            <person name="Kyrpides N."/>
            <person name="Kim E."/>
            <person name="Brettar I."/>
            <person name="Rodrigues J."/>
            <person name="Konstantinidis K."/>
            <person name="Klappenbach J."/>
            <person name="Hofle M."/>
            <person name="Tiedje J."/>
            <person name="Richardson P."/>
        </authorList>
    </citation>
    <scope>NUCLEOTIDE SEQUENCE [LARGE SCALE GENOMIC DNA]</scope>
    <source>
        <strain>OS195</strain>
    </source>
</reference>
<organism>
    <name type="scientific">Shewanella baltica (strain OS195)</name>
    <dbReference type="NCBI Taxonomy" id="399599"/>
    <lineage>
        <taxon>Bacteria</taxon>
        <taxon>Pseudomonadati</taxon>
        <taxon>Pseudomonadota</taxon>
        <taxon>Gammaproteobacteria</taxon>
        <taxon>Alteromonadales</taxon>
        <taxon>Shewanellaceae</taxon>
        <taxon>Shewanella</taxon>
    </lineage>
</organism>
<name>LEXA_SHEB9</name>
<gene>
    <name evidence="1" type="primary">lexA</name>
    <name type="ordered locus">Sbal195_4309</name>
</gene>
<proteinExistence type="inferred from homology"/>
<protein>
    <recommendedName>
        <fullName evidence="1">LexA repressor</fullName>
        <ecNumber evidence="1">3.4.21.88</ecNumber>
    </recommendedName>
</protein>
<evidence type="ECO:0000255" key="1">
    <source>
        <dbReference type="HAMAP-Rule" id="MF_00015"/>
    </source>
</evidence>
<accession>A9KUW8</accession>
<feature type="chain" id="PRO_1000074064" description="LexA repressor">
    <location>
        <begin position="1"/>
        <end position="206"/>
    </location>
</feature>
<feature type="DNA-binding region" description="H-T-H motif" evidence="1">
    <location>
        <begin position="28"/>
        <end position="48"/>
    </location>
</feature>
<feature type="active site" description="For autocatalytic cleavage activity" evidence="1">
    <location>
        <position position="123"/>
    </location>
</feature>
<feature type="active site" description="For autocatalytic cleavage activity" evidence="1">
    <location>
        <position position="160"/>
    </location>
</feature>
<feature type="site" description="Cleavage; by autolysis" evidence="1">
    <location>
        <begin position="88"/>
        <end position="89"/>
    </location>
</feature>
<dbReference type="EC" id="3.4.21.88" evidence="1"/>
<dbReference type="EMBL" id="CP000891">
    <property type="protein sequence ID" value="ABX51467.1"/>
    <property type="molecule type" value="Genomic_DNA"/>
</dbReference>
<dbReference type="RefSeq" id="WP_006084613.1">
    <property type="nucleotide sequence ID" value="NC_009997.1"/>
</dbReference>
<dbReference type="SMR" id="A9KUW8"/>
<dbReference type="MEROPS" id="S24.001"/>
<dbReference type="GeneID" id="11774286"/>
<dbReference type="KEGG" id="sbn:Sbal195_4309"/>
<dbReference type="HOGENOM" id="CLU_066192_45_3_6"/>
<dbReference type="Proteomes" id="UP000000770">
    <property type="component" value="Chromosome"/>
</dbReference>
<dbReference type="GO" id="GO:0003677">
    <property type="term" value="F:DNA binding"/>
    <property type="evidence" value="ECO:0007669"/>
    <property type="project" value="UniProtKB-UniRule"/>
</dbReference>
<dbReference type="GO" id="GO:0004252">
    <property type="term" value="F:serine-type endopeptidase activity"/>
    <property type="evidence" value="ECO:0007669"/>
    <property type="project" value="UniProtKB-UniRule"/>
</dbReference>
<dbReference type="GO" id="GO:0006281">
    <property type="term" value="P:DNA repair"/>
    <property type="evidence" value="ECO:0007669"/>
    <property type="project" value="UniProtKB-UniRule"/>
</dbReference>
<dbReference type="GO" id="GO:0006260">
    <property type="term" value="P:DNA replication"/>
    <property type="evidence" value="ECO:0007669"/>
    <property type="project" value="UniProtKB-UniRule"/>
</dbReference>
<dbReference type="GO" id="GO:0045892">
    <property type="term" value="P:negative regulation of DNA-templated transcription"/>
    <property type="evidence" value="ECO:0007669"/>
    <property type="project" value="UniProtKB-UniRule"/>
</dbReference>
<dbReference type="GO" id="GO:0006508">
    <property type="term" value="P:proteolysis"/>
    <property type="evidence" value="ECO:0007669"/>
    <property type="project" value="InterPro"/>
</dbReference>
<dbReference type="GO" id="GO:0009432">
    <property type="term" value="P:SOS response"/>
    <property type="evidence" value="ECO:0007669"/>
    <property type="project" value="UniProtKB-UniRule"/>
</dbReference>
<dbReference type="CDD" id="cd06529">
    <property type="entry name" value="S24_LexA-like"/>
    <property type="match status" value="1"/>
</dbReference>
<dbReference type="FunFam" id="1.10.10.10:FF:000009">
    <property type="entry name" value="LexA repressor"/>
    <property type="match status" value="1"/>
</dbReference>
<dbReference type="FunFam" id="2.10.109.10:FF:000001">
    <property type="entry name" value="LexA repressor"/>
    <property type="match status" value="1"/>
</dbReference>
<dbReference type="Gene3D" id="2.10.109.10">
    <property type="entry name" value="Umud Fragment, subunit A"/>
    <property type="match status" value="1"/>
</dbReference>
<dbReference type="Gene3D" id="1.10.10.10">
    <property type="entry name" value="Winged helix-like DNA-binding domain superfamily/Winged helix DNA-binding domain"/>
    <property type="match status" value="1"/>
</dbReference>
<dbReference type="HAMAP" id="MF_00015">
    <property type="entry name" value="LexA"/>
    <property type="match status" value="1"/>
</dbReference>
<dbReference type="InterPro" id="IPR006200">
    <property type="entry name" value="LexA"/>
</dbReference>
<dbReference type="InterPro" id="IPR039418">
    <property type="entry name" value="LexA-like"/>
</dbReference>
<dbReference type="InterPro" id="IPR036286">
    <property type="entry name" value="LexA/Signal_pep-like_sf"/>
</dbReference>
<dbReference type="InterPro" id="IPR006199">
    <property type="entry name" value="LexA_DNA-bd_dom"/>
</dbReference>
<dbReference type="InterPro" id="IPR050077">
    <property type="entry name" value="LexA_repressor"/>
</dbReference>
<dbReference type="InterPro" id="IPR006197">
    <property type="entry name" value="Peptidase_S24_LexA"/>
</dbReference>
<dbReference type="InterPro" id="IPR015927">
    <property type="entry name" value="Peptidase_S24_S26A/B/C"/>
</dbReference>
<dbReference type="InterPro" id="IPR036388">
    <property type="entry name" value="WH-like_DNA-bd_sf"/>
</dbReference>
<dbReference type="InterPro" id="IPR036390">
    <property type="entry name" value="WH_DNA-bd_sf"/>
</dbReference>
<dbReference type="NCBIfam" id="TIGR00498">
    <property type="entry name" value="lexA"/>
    <property type="match status" value="1"/>
</dbReference>
<dbReference type="PANTHER" id="PTHR33516">
    <property type="entry name" value="LEXA REPRESSOR"/>
    <property type="match status" value="1"/>
</dbReference>
<dbReference type="PANTHER" id="PTHR33516:SF2">
    <property type="entry name" value="LEXA REPRESSOR-RELATED"/>
    <property type="match status" value="1"/>
</dbReference>
<dbReference type="Pfam" id="PF01726">
    <property type="entry name" value="LexA_DNA_bind"/>
    <property type="match status" value="1"/>
</dbReference>
<dbReference type="Pfam" id="PF00717">
    <property type="entry name" value="Peptidase_S24"/>
    <property type="match status" value="1"/>
</dbReference>
<dbReference type="PRINTS" id="PR00726">
    <property type="entry name" value="LEXASERPTASE"/>
</dbReference>
<dbReference type="SUPFAM" id="SSF51306">
    <property type="entry name" value="LexA/Signal peptidase"/>
    <property type="match status" value="1"/>
</dbReference>
<dbReference type="SUPFAM" id="SSF46785">
    <property type="entry name" value="Winged helix' DNA-binding domain"/>
    <property type="match status" value="1"/>
</dbReference>
<comment type="function">
    <text evidence="1">Represses a number of genes involved in the response to DNA damage (SOS response), including recA and lexA. In the presence of single-stranded DNA, RecA interacts with LexA causing an autocatalytic cleavage which disrupts the DNA-binding part of LexA, leading to derepression of the SOS regulon and eventually DNA repair.</text>
</comment>
<comment type="catalytic activity">
    <reaction evidence="1">
        <text>Hydrolysis of Ala-|-Gly bond in repressor LexA.</text>
        <dbReference type="EC" id="3.4.21.88"/>
    </reaction>
</comment>
<comment type="subunit">
    <text evidence="1">Homodimer.</text>
</comment>
<comment type="similarity">
    <text evidence="1">Belongs to the peptidase S24 family.</text>
</comment>